<organism>
    <name type="scientific">Mycobacterium tuberculosis (strain ATCC 25618 / H37Rv)</name>
    <dbReference type="NCBI Taxonomy" id="83332"/>
    <lineage>
        <taxon>Bacteria</taxon>
        <taxon>Bacillati</taxon>
        <taxon>Actinomycetota</taxon>
        <taxon>Actinomycetes</taxon>
        <taxon>Mycobacteriales</taxon>
        <taxon>Mycobacteriaceae</taxon>
        <taxon>Mycobacterium</taxon>
        <taxon>Mycobacterium tuberculosis complex</taxon>
    </lineage>
</organism>
<feature type="chain" id="PRO_0000105255" description="Putative amidase AmiB2">
    <location>
        <begin position="1"/>
        <end position="462"/>
    </location>
</feature>
<feature type="active site" description="Charge relay system" evidence="1">
    <location>
        <position position="81"/>
    </location>
</feature>
<feature type="active site" description="Charge relay system" evidence="1">
    <location>
        <position position="155"/>
    </location>
</feature>
<feature type="active site" description="Acyl-ester intermediate" evidence="1">
    <location>
        <position position="179"/>
    </location>
</feature>
<protein>
    <recommendedName>
        <fullName>Putative amidase AmiB2</fullName>
        <ecNumber>3.5.1.4</ecNumber>
    </recommendedName>
</protein>
<evidence type="ECO:0000250" key="1"/>
<evidence type="ECO:0000305" key="2"/>
<name>AMIB2_MYCTU</name>
<comment type="catalytic activity">
    <reaction>
        <text>a monocarboxylic acid amide + H2O = a monocarboxylate + NH4(+)</text>
        <dbReference type="Rhea" id="RHEA:12020"/>
        <dbReference type="ChEBI" id="CHEBI:15377"/>
        <dbReference type="ChEBI" id="CHEBI:28938"/>
        <dbReference type="ChEBI" id="CHEBI:35757"/>
        <dbReference type="ChEBI" id="CHEBI:83628"/>
        <dbReference type="EC" id="3.5.1.4"/>
    </reaction>
</comment>
<comment type="miscellaneous">
    <text>Was identified as a high-confidence drug target.</text>
</comment>
<comment type="similarity">
    <text evidence="2">Belongs to the amidase family.</text>
</comment>
<reference key="1">
    <citation type="journal article" date="1998" name="Nature">
        <title>Deciphering the biology of Mycobacterium tuberculosis from the complete genome sequence.</title>
        <authorList>
            <person name="Cole S.T."/>
            <person name="Brosch R."/>
            <person name="Parkhill J."/>
            <person name="Garnier T."/>
            <person name="Churcher C.M."/>
            <person name="Harris D.E."/>
            <person name="Gordon S.V."/>
            <person name="Eiglmeier K."/>
            <person name="Gas S."/>
            <person name="Barry C.E. III"/>
            <person name="Tekaia F."/>
            <person name="Badcock K."/>
            <person name="Basham D."/>
            <person name="Brown D."/>
            <person name="Chillingworth T."/>
            <person name="Connor R."/>
            <person name="Davies R.M."/>
            <person name="Devlin K."/>
            <person name="Feltwell T."/>
            <person name="Gentles S."/>
            <person name="Hamlin N."/>
            <person name="Holroyd S."/>
            <person name="Hornsby T."/>
            <person name="Jagels K."/>
            <person name="Krogh A."/>
            <person name="McLean J."/>
            <person name="Moule S."/>
            <person name="Murphy L.D."/>
            <person name="Oliver S."/>
            <person name="Osborne J."/>
            <person name="Quail M.A."/>
            <person name="Rajandream M.A."/>
            <person name="Rogers J."/>
            <person name="Rutter S."/>
            <person name="Seeger K."/>
            <person name="Skelton S."/>
            <person name="Squares S."/>
            <person name="Squares R."/>
            <person name="Sulston J.E."/>
            <person name="Taylor K."/>
            <person name="Whitehead S."/>
            <person name="Barrell B.G."/>
        </authorList>
    </citation>
    <scope>NUCLEOTIDE SEQUENCE [LARGE SCALE GENOMIC DNA]</scope>
    <source>
        <strain>ATCC 25618 / H37Rv</strain>
    </source>
</reference>
<reference key="2">
    <citation type="journal article" date="2008" name="BMC Syst. Biol.">
        <title>targetTB: a target identification pipeline for Mycobacterium tuberculosis through an interactome, reactome and genome-scale structural analysis.</title>
        <authorList>
            <person name="Raman K."/>
            <person name="Yeturu K."/>
            <person name="Chandra N."/>
        </authorList>
    </citation>
    <scope>IDENTIFICATION AS A DRUG TARGET [LARGE SCALE ANALYSIS]</scope>
</reference>
<reference key="3">
    <citation type="journal article" date="2011" name="Mol. Cell. Proteomics">
        <title>Proteogenomic analysis of Mycobacterium tuberculosis by high resolution mass spectrometry.</title>
        <authorList>
            <person name="Kelkar D.S."/>
            <person name="Kumar D."/>
            <person name="Kumar P."/>
            <person name="Balakrishnan L."/>
            <person name="Muthusamy B."/>
            <person name="Yadav A.K."/>
            <person name="Shrivastava P."/>
            <person name="Marimuthu A."/>
            <person name="Anand S."/>
            <person name="Sundaram H."/>
            <person name="Kingsbury R."/>
            <person name="Harsha H.C."/>
            <person name="Nair B."/>
            <person name="Prasad T.S."/>
            <person name="Chauhan D.S."/>
            <person name="Katoch K."/>
            <person name="Katoch V.M."/>
            <person name="Kumar P."/>
            <person name="Chaerkady R."/>
            <person name="Ramachandran S."/>
            <person name="Dash D."/>
            <person name="Pandey A."/>
        </authorList>
    </citation>
    <scope>IDENTIFICATION BY MASS SPECTROMETRY [LARGE SCALE ANALYSIS]</scope>
    <source>
        <strain>ATCC 25618 / H37Rv</strain>
    </source>
</reference>
<dbReference type="EC" id="3.5.1.4"/>
<dbReference type="EMBL" id="AL123456">
    <property type="protein sequence ID" value="CCP44019.1"/>
    <property type="molecule type" value="Genomic_DNA"/>
</dbReference>
<dbReference type="PIR" id="G70753">
    <property type="entry name" value="G70753"/>
</dbReference>
<dbReference type="RefSeq" id="NP_215779.1">
    <property type="nucleotide sequence ID" value="NC_000962.3"/>
</dbReference>
<dbReference type="RefSeq" id="WP_003406369.1">
    <property type="nucleotide sequence ID" value="NZ_NVQJ01000049.1"/>
</dbReference>
<dbReference type="SMR" id="P9WQ97"/>
<dbReference type="FunCoup" id="P9WQ97">
    <property type="interactions" value="107"/>
</dbReference>
<dbReference type="STRING" id="83332.Rv1263"/>
<dbReference type="PaxDb" id="83332-Rv1263"/>
<dbReference type="DNASU" id="887041"/>
<dbReference type="GeneID" id="887041"/>
<dbReference type="KEGG" id="mtu:Rv1263"/>
<dbReference type="KEGG" id="mtv:RVBD_1263"/>
<dbReference type="TubercuList" id="Rv1263"/>
<dbReference type="eggNOG" id="COG0154">
    <property type="taxonomic scope" value="Bacteria"/>
</dbReference>
<dbReference type="InParanoid" id="P9WQ97"/>
<dbReference type="OrthoDB" id="5175573at2"/>
<dbReference type="PhylomeDB" id="P9WQ97"/>
<dbReference type="Proteomes" id="UP000001584">
    <property type="component" value="Chromosome"/>
</dbReference>
<dbReference type="GO" id="GO:0004040">
    <property type="term" value="F:amidase activity"/>
    <property type="evidence" value="ECO:0007669"/>
    <property type="project" value="UniProtKB-EC"/>
</dbReference>
<dbReference type="Gene3D" id="3.90.1300.10">
    <property type="entry name" value="Amidase signature (AS) domain"/>
    <property type="match status" value="1"/>
</dbReference>
<dbReference type="InterPro" id="IPR000120">
    <property type="entry name" value="Amidase"/>
</dbReference>
<dbReference type="InterPro" id="IPR020556">
    <property type="entry name" value="Amidase_CS"/>
</dbReference>
<dbReference type="InterPro" id="IPR023631">
    <property type="entry name" value="Amidase_dom"/>
</dbReference>
<dbReference type="InterPro" id="IPR036928">
    <property type="entry name" value="AS_sf"/>
</dbReference>
<dbReference type="NCBIfam" id="NF009119">
    <property type="entry name" value="PRK12470.1"/>
    <property type="match status" value="1"/>
</dbReference>
<dbReference type="PANTHER" id="PTHR11895:SF7">
    <property type="entry name" value="GLUTAMYL-TRNA(GLN) AMIDOTRANSFERASE SUBUNIT A, MITOCHONDRIAL"/>
    <property type="match status" value="1"/>
</dbReference>
<dbReference type="PANTHER" id="PTHR11895">
    <property type="entry name" value="TRANSAMIDASE"/>
    <property type="match status" value="1"/>
</dbReference>
<dbReference type="Pfam" id="PF01425">
    <property type="entry name" value="Amidase"/>
    <property type="match status" value="1"/>
</dbReference>
<dbReference type="SUPFAM" id="SSF75304">
    <property type="entry name" value="Amidase signature (AS) enzymes"/>
    <property type="match status" value="1"/>
</dbReference>
<dbReference type="PROSITE" id="PS00571">
    <property type="entry name" value="AMIDASES"/>
    <property type="match status" value="1"/>
</dbReference>
<keyword id="KW-0378">Hydrolase</keyword>
<keyword id="KW-1185">Reference proteome</keyword>
<proteinExistence type="evidence at protein level"/>
<sequence>MDPTDLAFAGAAAQARMLADGALTAPMLLEVYLQRIERLDSHLRAYRVVQFDRARAEAEAAQQRLDAGERLPLLGVPIAIKDDVDIAGEVTTYGSAGHGPAATSDAEVVRRLRAAGAVIIGKTNVPELMIMPFTESLAFGATRNPWCLNRTPGGSSGGSAAAVAAGLAPVALGSDGGGSIRIPCTWCGLFGLKPQRDRISLEPHDGAWQGLSVNGPIARSVMDAALLLDATTTVPGPEGEFVAAAARQPGRLRIALSTRVPTPLPVRCGKQELAAVHQAGALLRDLGHDVVVRDPDYPASTYANYLPRFFRGISDDADAQAHPDRLEARTRAIARLGSFFSDRRMAALRAAEVVLSSRIQSIFDDVDVVVTPGAATGPSRIGAYQRRGAVSTLLLVVQRVPYFQVWNLTGQPAAVVPWDFDGDGLPMSVQLVGRPYDEATLLALAAQIESARPWAHRRPSVS</sequence>
<gene>
    <name type="primary">amiB2</name>
    <name type="ordered locus">Rv1263</name>
    <name type="ORF">MTCY50.19c</name>
</gene>
<accession>P9WQ97</accession>
<accession>L0T8V5</accession>
<accession>P63492</accession>
<accession>Q11056</accession>